<gene>
    <name evidence="1" type="primary">ruvA</name>
    <name type="ordered locus">CPS_2116</name>
</gene>
<organism>
    <name type="scientific">Colwellia psychrerythraea (strain 34H / ATCC BAA-681)</name>
    <name type="common">Vibrio psychroerythus</name>
    <dbReference type="NCBI Taxonomy" id="167879"/>
    <lineage>
        <taxon>Bacteria</taxon>
        <taxon>Pseudomonadati</taxon>
        <taxon>Pseudomonadota</taxon>
        <taxon>Gammaproteobacteria</taxon>
        <taxon>Alteromonadales</taxon>
        <taxon>Colwelliaceae</taxon>
        <taxon>Colwellia</taxon>
    </lineage>
</organism>
<feature type="chain" id="PRO_0000224857" description="Holliday junction branch migration complex subunit RuvA">
    <location>
        <begin position="1"/>
        <end position="211"/>
    </location>
</feature>
<feature type="region of interest" description="Domain I" evidence="1">
    <location>
        <begin position="1"/>
        <end position="64"/>
    </location>
</feature>
<feature type="region of interest" description="Domain II" evidence="1">
    <location>
        <begin position="65"/>
        <end position="143"/>
    </location>
</feature>
<feature type="region of interest" description="Flexible linker" evidence="1">
    <location>
        <begin position="144"/>
        <end position="162"/>
    </location>
</feature>
<feature type="region of interest" description="Domain III" evidence="1">
    <location>
        <begin position="163"/>
        <end position="211"/>
    </location>
</feature>
<name>RUVA_COLP3</name>
<proteinExistence type="inferred from homology"/>
<keyword id="KW-0963">Cytoplasm</keyword>
<keyword id="KW-0227">DNA damage</keyword>
<keyword id="KW-0233">DNA recombination</keyword>
<keyword id="KW-0234">DNA repair</keyword>
<keyword id="KW-0238">DNA-binding</keyword>
<protein>
    <recommendedName>
        <fullName evidence="1">Holliday junction branch migration complex subunit RuvA</fullName>
    </recommendedName>
</protein>
<accession>Q483C5</accession>
<comment type="function">
    <text evidence="1">The RuvA-RuvB-RuvC complex processes Holliday junction (HJ) DNA during genetic recombination and DNA repair, while the RuvA-RuvB complex plays an important role in the rescue of blocked DNA replication forks via replication fork reversal (RFR). RuvA specifically binds to HJ cruciform DNA, conferring on it an open structure. The RuvB hexamer acts as an ATP-dependent pump, pulling dsDNA into and through the RuvAB complex. HJ branch migration allows RuvC to scan DNA until it finds its consensus sequence, where it cleaves and resolves the cruciform DNA.</text>
</comment>
<comment type="subunit">
    <text evidence="1">Homotetramer. Forms an RuvA(8)-RuvB(12)-Holliday junction (HJ) complex. HJ DNA is sandwiched between 2 RuvA tetramers; dsDNA enters through RuvA and exits via RuvB. An RuvB hexamer assembles on each DNA strand where it exits the tetramer. Each RuvB hexamer is contacted by two RuvA subunits (via domain III) on 2 adjacent RuvB subunits; this complex drives branch migration. In the full resolvosome a probable DNA-RuvA(4)-RuvB(12)-RuvC(2) complex forms which resolves the HJ.</text>
</comment>
<comment type="subcellular location">
    <subcellularLocation>
        <location evidence="1">Cytoplasm</location>
    </subcellularLocation>
</comment>
<comment type="domain">
    <text evidence="1">Has three domains with a flexible linker between the domains II and III and assumes an 'L' shape. Domain III is highly mobile and contacts RuvB.</text>
</comment>
<comment type="similarity">
    <text evidence="1">Belongs to the RuvA family.</text>
</comment>
<sequence length="211" mass="23494">MIGRLRGMLVEKNSPEILIECAGVGYEVTMPMTSIYALPELEQQATIYTHFVVREDAQLLYGFANKVERKLFRLLIKVNGVGPKLALAILSNMSADQFVSCVRHDDISAIVKIPGVGKKTAERLLIEMRDRLKDWQAQQIHLVSDDGVIPEQLSAELSQETTFVNDNKGDAINALLSLGYKQVQADKAVKSVYNRGMSSENIIRDALKSMI</sequence>
<dbReference type="EMBL" id="CP000083">
    <property type="protein sequence ID" value="AAZ25766.1"/>
    <property type="molecule type" value="Genomic_DNA"/>
</dbReference>
<dbReference type="RefSeq" id="WP_011042936.1">
    <property type="nucleotide sequence ID" value="NC_003910.7"/>
</dbReference>
<dbReference type="SMR" id="Q483C5"/>
<dbReference type="STRING" id="167879.CPS_2116"/>
<dbReference type="KEGG" id="cps:CPS_2116"/>
<dbReference type="eggNOG" id="COG0632">
    <property type="taxonomic scope" value="Bacteria"/>
</dbReference>
<dbReference type="HOGENOM" id="CLU_087936_0_0_6"/>
<dbReference type="Proteomes" id="UP000000547">
    <property type="component" value="Chromosome"/>
</dbReference>
<dbReference type="GO" id="GO:0005737">
    <property type="term" value="C:cytoplasm"/>
    <property type="evidence" value="ECO:0007669"/>
    <property type="project" value="UniProtKB-SubCell"/>
</dbReference>
<dbReference type="GO" id="GO:0009379">
    <property type="term" value="C:Holliday junction helicase complex"/>
    <property type="evidence" value="ECO:0007669"/>
    <property type="project" value="InterPro"/>
</dbReference>
<dbReference type="GO" id="GO:0048476">
    <property type="term" value="C:Holliday junction resolvase complex"/>
    <property type="evidence" value="ECO:0007669"/>
    <property type="project" value="UniProtKB-UniRule"/>
</dbReference>
<dbReference type="GO" id="GO:0005524">
    <property type="term" value="F:ATP binding"/>
    <property type="evidence" value="ECO:0007669"/>
    <property type="project" value="InterPro"/>
</dbReference>
<dbReference type="GO" id="GO:0000400">
    <property type="term" value="F:four-way junction DNA binding"/>
    <property type="evidence" value="ECO:0007669"/>
    <property type="project" value="UniProtKB-UniRule"/>
</dbReference>
<dbReference type="GO" id="GO:0009378">
    <property type="term" value="F:four-way junction helicase activity"/>
    <property type="evidence" value="ECO:0007669"/>
    <property type="project" value="InterPro"/>
</dbReference>
<dbReference type="GO" id="GO:0006310">
    <property type="term" value="P:DNA recombination"/>
    <property type="evidence" value="ECO:0007669"/>
    <property type="project" value="UniProtKB-UniRule"/>
</dbReference>
<dbReference type="GO" id="GO:0006281">
    <property type="term" value="P:DNA repair"/>
    <property type="evidence" value="ECO:0007669"/>
    <property type="project" value="UniProtKB-UniRule"/>
</dbReference>
<dbReference type="CDD" id="cd14332">
    <property type="entry name" value="UBA_RuvA_C"/>
    <property type="match status" value="1"/>
</dbReference>
<dbReference type="FunFam" id="2.40.50.140:FF:000083">
    <property type="entry name" value="Holliday junction ATP-dependent DNA helicase RuvA"/>
    <property type="match status" value="1"/>
</dbReference>
<dbReference type="Gene3D" id="1.10.150.20">
    <property type="entry name" value="5' to 3' exonuclease, C-terminal subdomain"/>
    <property type="match status" value="1"/>
</dbReference>
<dbReference type="Gene3D" id="1.10.8.10">
    <property type="entry name" value="DNA helicase RuvA subunit, C-terminal domain"/>
    <property type="match status" value="1"/>
</dbReference>
<dbReference type="Gene3D" id="2.40.50.140">
    <property type="entry name" value="Nucleic acid-binding proteins"/>
    <property type="match status" value="1"/>
</dbReference>
<dbReference type="HAMAP" id="MF_00031">
    <property type="entry name" value="DNA_HJ_migration_RuvA"/>
    <property type="match status" value="1"/>
</dbReference>
<dbReference type="InterPro" id="IPR013849">
    <property type="entry name" value="DNA_helicase_Holl-junc_RuvA_I"/>
</dbReference>
<dbReference type="InterPro" id="IPR003583">
    <property type="entry name" value="Hlx-hairpin-Hlx_DNA-bd_motif"/>
</dbReference>
<dbReference type="InterPro" id="IPR012340">
    <property type="entry name" value="NA-bd_OB-fold"/>
</dbReference>
<dbReference type="InterPro" id="IPR000085">
    <property type="entry name" value="RuvA"/>
</dbReference>
<dbReference type="InterPro" id="IPR010994">
    <property type="entry name" value="RuvA_2-like"/>
</dbReference>
<dbReference type="InterPro" id="IPR011114">
    <property type="entry name" value="RuvA_C"/>
</dbReference>
<dbReference type="InterPro" id="IPR036267">
    <property type="entry name" value="RuvA_C_sf"/>
</dbReference>
<dbReference type="NCBIfam" id="TIGR00084">
    <property type="entry name" value="ruvA"/>
    <property type="match status" value="1"/>
</dbReference>
<dbReference type="Pfam" id="PF14520">
    <property type="entry name" value="HHH_5"/>
    <property type="match status" value="1"/>
</dbReference>
<dbReference type="Pfam" id="PF07499">
    <property type="entry name" value="RuvA_C"/>
    <property type="match status" value="1"/>
</dbReference>
<dbReference type="Pfam" id="PF01330">
    <property type="entry name" value="RuvA_N"/>
    <property type="match status" value="1"/>
</dbReference>
<dbReference type="SMART" id="SM00278">
    <property type="entry name" value="HhH1"/>
    <property type="match status" value="2"/>
</dbReference>
<dbReference type="SUPFAM" id="SSF46929">
    <property type="entry name" value="DNA helicase RuvA subunit, C-terminal domain"/>
    <property type="match status" value="1"/>
</dbReference>
<dbReference type="SUPFAM" id="SSF50249">
    <property type="entry name" value="Nucleic acid-binding proteins"/>
    <property type="match status" value="1"/>
</dbReference>
<dbReference type="SUPFAM" id="SSF47781">
    <property type="entry name" value="RuvA domain 2-like"/>
    <property type="match status" value="1"/>
</dbReference>
<evidence type="ECO:0000255" key="1">
    <source>
        <dbReference type="HAMAP-Rule" id="MF_00031"/>
    </source>
</evidence>
<reference key="1">
    <citation type="journal article" date="2005" name="Proc. Natl. Acad. Sci. U.S.A.">
        <title>The psychrophilic lifestyle as revealed by the genome sequence of Colwellia psychrerythraea 34H through genomic and proteomic analyses.</title>
        <authorList>
            <person name="Methe B.A."/>
            <person name="Nelson K.E."/>
            <person name="Deming J.W."/>
            <person name="Momen B."/>
            <person name="Melamud E."/>
            <person name="Zhang X."/>
            <person name="Moult J."/>
            <person name="Madupu R."/>
            <person name="Nelson W.C."/>
            <person name="Dodson R.J."/>
            <person name="Brinkac L.M."/>
            <person name="Daugherty S.C."/>
            <person name="Durkin A.S."/>
            <person name="DeBoy R.T."/>
            <person name="Kolonay J.F."/>
            <person name="Sullivan S.A."/>
            <person name="Zhou L."/>
            <person name="Davidsen T.M."/>
            <person name="Wu M."/>
            <person name="Huston A.L."/>
            <person name="Lewis M."/>
            <person name="Weaver B."/>
            <person name="Weidman J.F."/>
            <person name="Khouri H."/>
            <person name="Utterback T.R."/>
            <person name="Feldblyum T.V."/>
            <person name="Fraser C.M."/>
        </authorList>
    </citation>
    <scope>NUCLEOTIDE SEQUENCE [LARGE SCALE GENOMIC DNA]</scope>
    <source>
        <strain>34H / ATCC BAA-681</strain>
    </source>
</reference>